<protein>
    <recommendedName>
        <fullName evidence="7">Inner kinetochore subunit MCM22</fullName>
    </recommendedName>
    <alternativeName>
        <fullName evidence="6">CENP-K homolog</fullName>
    </alternativeName>
    <alternativeName>
        <fullName evidence="7">Constitutive centromere-associated network protein MCM22</fullName>
    </alternativeName>
    <alternativeName>
        <fullName>Minichromosome maintenance protein 22</fullName>
    </alternativeName>
</protein>
<dbReference type="EMBL" id="Z49635">
    <property type="protein sequence ID" value="CAA89666.1"/>
    <property type="molecule type" value="Genomic_DNA"/>
</dbReference>
<dbReference type="EMBL" id="BK006943">
    <property type="protein sequence ID" value="DAA08919.1"/>
    <property type="molecule type" value="Genomic_DNA"/>
</dbReference>
<dbReference type="PIR" id="S57158">
    <property type="entry name" value="S57158"/>
</dbReference>
<dbReference type="RefSeq" id="NP_012669.1">
    <property type="nucleotide sequence ID" value="NM_001181793.1"/>
</dbReference>
<dbReference type="PDB" id="6OUA">
    <property type="method" value="EM"/>
    <property type="resolution" value="4.18 A"/>
    <property type="chains" value="K=1-239"/>
</dbReference>
<dbReference type="PDB" id="6QLD">
    <property type="method" value="EM"/>
    <property type="resolution" value="4.15 A"/>
    <property type="chains" value="K=7-128"/>
</dbReference>
<dbReference type="PDB" id="6QLE">
    <property type="method" value="EM"/>
    <property type="resolution" value="3.55 A"/>
    <property type="chains" value="K=1-133"/>
</dbReference>
<dbReference type="PDB" id="6WUC">
    <property type="method" value="EM"/>
    <property type="resolution" value="3.23 A"/>
    <property type="chains" value="K=1-239"/>
</dbReference>
<dbReference type="PDB" id="6YPC">
    <property type="method" value="X-ray"/>
    <property type="resolution" value="2.90 A"/>
    <property type="chains" value="K=131-239"/>
</dbReference>
<dbReference type="PDB" id="7L7Q">
    <property type="method" value="EM"/>
    <property type="resolution" value="3.70 A"/>
    <property type="chains" value="K=1-239"/>
</dbReference>
<dbReference type="PDB" id="8OVW">
    <property type="method" value="EM"/>
    <property type="resolution" value="3.40 A"/>
    <property type="chains" value="K=1-239"/>
</dbReference>
<dbReference type="PDB" id="8OW0">
    <property type="method" value="EM"/>
    <property type="resolution" value="3.40 A"/>
    <property type="chains" value="K=1-239"/>
</dbReference>
<dbReference type="PDB" id="8OW1">
    <property type="method" value="EM"/>
    <property type="resolution" value="3.70 A"/>
    <property type="chains" value="K/KK=1-239"/>
</dbReference>
<dbReference type="PDBsum" id="6OUA"/>
<dbReference type="PDBsum" id="6QLD"/>
<dbReference type="PDBsum" id="6QLE"/>
<dbReference type="PDBsum" id="6WUC"/>
<dbReference type="PDBsum" id="6YPC"/>
<dbReference type="PDBsum" id="7L7Q"/>
<dbReference type="PDBsum" id="8OVW"/>
<dbReference type="PDBsum" id="8OW0"/>
<dbReference type="PDBsum" id="8OW1"/>
<dbReference type="EMDB" id="EMD-17224"/>
<dbReference type="EMDB" id="EMD-17226"/>
<dbReference type="EMDB" id="EMD-17227"/>
<dbReference type="EMDB" id="EMD-20200"/>
<dbReference type="EMDB" id="EMD-21910"/>
<dbReference type="EMDB" id="EMD-23216"/>
<dbReference type="EMDB" id="EMD-4579"/>
<dbReference type="EMDB" id="EMD-4580"/>
<dbReference type="SMR" id="P47167"/>
<dbReference type="BioGRID" id="33890">
    <property type="interactions" value="166"/>
</dbReference>
<dbReference type="ComplexPortal" id="CPX-1156">
    <property type="entry name" value="Central kinetochore CTF19 complex"/>
</dbReference>
<dbReference type="ComplexPortal" id="CPX-2533">
    <property type="entry name" value="Kinetochore CCAN complex"/>
</dbReference>
<dbReference type="DIP" id="DIP-1431N"/>
<dbReference type="FunCoup" id="P47167">
    <property type="interactions" value="81"/>
</dbReference>
<dbReference type="IntAct" id="P47167">
    <property type="interactions" value="10"/>
</dbReference>
<dbReference type="MINT" id="P47167"/>
<dbReference type="STRING" id="4932.YJR135C"/>
<dbReference type="GlyGen" id="P47167">
    <property type="glycosylation" value="1 site, 1 O-linked glycan (1 site)"/>
</dbReference>
<dbReference type="PaxDb" id="4932-YJR135C"/>
<dbReference type="PeptideAtlas" id="P47167"/>
<dbReference type="EnsemblFungi" id="YJR135C_mRNA">
    <property type="protein sequence ID" value="YJR135C"/>
    <property type="gene ID" value="YJR135C"/>
</dbReference>
<dbReference type="GeneID" id="853599"/>
<dbReference type="KEGG" id="sce:YJR135C"/>
<dbReference type="AGR" id="SGD:S000003896"/>
<dbReference type="SGD" id="S000003896">
    <property type="gene designation" value="MCM22"/>
</dbReference>
<dbReference type="VEuPathDB" id="FungiDB:YJR135C"/>
<dbReference type="eggNOG" id="ENOG502S4RM">
    <property type="taxonomic scope" value="Eukaryota"/>
</dbReference>
<dbReference type="HOGENOM" id="CLU_105159_0_0_1"/>
<dbReference type="InParanoid" id="P47167"/>
<dbReference type="OMA" id="MFFPERS"/>
<dbReference type="OrthoDB" id="4035795at2759"/>
<dbReference type="BioCyc" id="YEAST:G3O-31752-MONOMER"/>
<dbReference type="BioGRID-ORCS" id="853599">
    <property type="hits" value="0 hits in 10 CRISPR screens"/>
</dbReference>
<dbReference type="PRO" id="PR:P47167"/>
<dbReference type="Proteomes" id="UP000002311">
    <property type="component" value="Chromosome X"/>
</dbReference>
<dbReference type="RNAct" id="P47167">
    <property type="molecule type" value="protein"/>
</dbReference>
<dbReference type="GO" id="GO:0000776">
    <property type="term" value="C:kinetochore"/>
    <property type="evidence" value="ECO:0000314"/>
    <property type="project" value="SGD"/>
</dbReference>
<dbReference type="GO" id="GO:0005634">
    <property type="term" value="C:nucleus"/>
    <property type="evidence" value="ECO:0007669"/>
    <property type="project" value="UniProtKB-SubCell"/>
</dbReference>
<dbReference type="GO" id="GO:0008608">
    <property type="term" value="P:attachment of spindle microtubules to kinetochore"/>
    <property type="evidence" value="ECO:0000303"/>
    <property type="project" value="ComplexPortal"/>
</dbReference>
<dbReference type="GO" id="GO:0051301">
    <property type="term" value="P:cell division"/>
    <property type="evidence" value="ECO:0007669"/>
    <property type="project" value="UniProtKB-KW"/>
</dbReference>
<dbReference type="GO" id="GO:0007059">
    <property type="term" value="P:chromosome segregation"/>
    <property type="evidence" value="ECO:0000315"/>
    <property type="project" value="SGD"/>
</dbReference>
<dbReference type="GO" id="GO:0034087">
    <property type="term" value="P:establishment of mitotic sister chromatid cohesion"/>
    <property type="evidence" value="ECO:0000315"/>
    <property type="project" value="SGD"/>
</dbReference>
<dbReference type="GO" id="GO:0051321">
    <property type="term" value="P:meiotic cell cycle"/>
    <property type="evidence" value="ECO:0007669"/>
    <property type="project" value="UniProtKB-KW"/>
</dbReference>
<dbReference type="CDD" id="cd22646">
    <property type="entry name" value="MCM22_CTD"/>
    <property type="match status" value="1"/>
</dbReference>
<sequence>MDVEKDVLDVYIKNLENQIGNKRYFLKQAQGAIDEITKRSLDTEGKPVNSEVFTELLRKPMFFSERADPIGFSLTSNFLSLRAQSSSEWLSLMNDQSVDQKAMLLLQNNINSDLKELLRKLQHQMTIMDSKKQDHAHIRTRKARNKELWDSLADFLKGYLVPNLDDNDESIDSLTNEVMLLMKRLIEHDLNLTLNDFSSKTIPIYRLLLRANIITVIEGSTNPGTKYIKLIDFNETSLT</sequence>
<comment type="function">
    <text evidence="5">Component of the kinetochore, a multiprotein complex that assembles on centromeric DNA and attaches chromosomes to spindle microtubules, mediating chromosome segregation and sister chromatid segregation during meiosis and mitosis. Component of the inner kinetochore constitutive centromere-associated network (CCAN), which serves as a structural platform for outer kinetochore assembly.</text>
</comment>
<comment type="subunit">
    <text evidence="1 2 4">Component of the heterotrimeric kinetochore subcomplex CTF3, which consists of CTF3, MCM16 and MCM22 (PubMed:11782448). The CTF3 subcomplex is part of a larger constitutive centromere-associated network (CCAN) (also known as central kinetochore CTF19 complex in yeast), which is composed of at least AME1, CHL4, CNN1, CTF3, CTF19, IML3, MCM16, MCM21, MCM22, MHF1, MHF2, MIF2, NKP1, NKP2, OKP1 and WIP1 (PubMed:12408861, PubMed:22561346). Interacts with CTF19 (PubMed:11782448).</text>
</comment>
<comment type="interaction">
    <interactant intactId="EBI-25691">
        <id>P47167</id>
    </interactant>
    <interactant intactId="EBI-5199">
        <id>Q02732</id>
        <label>CTF19</label>
    </interactant>
    <organismsDiffer>false</organismsDiffer>
    <experiments>2</experiments>
</comment>
<comment type="interaction">
    <interactant intactId="EBI-25691">
        <id>P47167</id>
    </interactant>
    <interactant intactId="EBI-30457">
        <id>Q12748</id>
        <label>CTF3</label>
    </interactant>
    <organismsDiffer>false</organismsDiffer>
    <experiments>3</experiments>
</comment>
<comment type="interaction">
    <interactant intactId="EBI-25691">
        <id>P47167</id>
    </interactant>
    <interactant intactId="EBI-31487">
        <id>Q12262</id>
        <label>MCM16</label>
    </interactant>
    <organismsDiffer>false</organismsDiffer>
    <experiments>7</experiments>
</comment>
<comment type="subcellular location">
    <subcellularLocation>
        <location>Nucleus</location>
    </subcellularLocation>
    <subcellularLocation>
        <location>Chromosome</location>
        <location>Centromere</location>
        <location>Kinetochore</location>
    </subcellularLocation>
    <text>Associated with kinetochores.</text>
</comment>
<comment type="miscellaneous">
    <text evidence="3">Present with 1026 molecules/cell in log phase SD medium.</text>
</comment>
<comment type="similarity">
    <text evidence="7">Belongs to the CENP-K/MCM22 family.</text>
</comment>
<proteinExistence type="evidence at protein level"/>
<evidence type="ECO:0000269" key="1">
    <source>
    </source>
</evidence>
<evidence type="ECO:0000269" key="2">
    <source>
    </source>
</evidence>
<evidence type="ECO:0000269" key="3">
    <source>
    </source>
</evidence>
<evidence type="ECO:0000269" key="4">
    <source>
    </source>
</evidence>
<evidence type="ECO:0000269" key="5">
    <source>
    </source>
</evidence>
<evidence type="ECO:0000303" key="6">
    <source>
    </source>
</evidence>
<evidence type="ECO:0000305" key="7"/>
<evidence type="ECO:0007829" key="8">
    <source>
        <dbReference type="PDB" id="6WUC"/>
    </source>
</evidence>
<evidence type="ECO:0007829" key="9">
    <source>
        <dbReference type="PDB" id="6YPC"/>
    </source>
</evidence>
<evidence type="ECO:0007829" key="10">
    <source>
        <dbReference type="PDB" id="8OVW"/>
    </source>
</evidence>
<name>CENPK_YEAST</name>
<feature type="chain" id="PRO_0000096283" description="Inner kinetochore subunit MCM22">
    <location>
        <begin position="1"/>
        <end position="239"/>
    </location>
</feature>
<feature type="helix" evidence="8">
    <location>
        <begin position="7"/>
        <end position="38"/>
    </location>
</feature>
<feature type="strand" evidence="8">
    <location>
        <begin position="42"/>
        <end position="44"/>
    </location>
</feature>
<feature type="helix" evidence="8">
    <location>
        <begin position="53"/>
        <end position="56"/>
    </location>
</feature>
<feature type="helix" evidence="8">
    <location>
        <begin position="70"/>
        <end position="128"/>
    </location>
</feature>
<feature type="turn" evidence="8">
    <location>
        <begin position="129"/>
        <end position="131"/>
    </location>
</feature>
<feature type="helix" evidence="9">
    <location>
        <begin position="139"/>
        <end position="158"/>
    </location>
</feature>
<feature type="turn" evidence="9">
    <location>
        <begin position="159"/>
        <end position="164"/>
    </location>
</feature>
<feature type="turn" evidence="9">
    <location>
        <begin position="167"/>
        <end position="169"/>
    </location>
</feature>
<feature type="helix" evidence="9">
    <location>
        <begin position="171"/>
        <end position="186"/>
    </location>
</feature>
<feature type="helix" evidence="9">
    <location>
        <begin position="194"/>
        <end position="196"/>
    </location>
</feature>
<feature type="turn" evidence="9">
    <location>
        <begin position="199"/>
        <end position="201"/>
    </location>
</feature>
<feature type="helix" evidence="9">
    <location>
        <begin position="202"/>
        <end position="211"/>
    </location>
</feature>
<feature type="strand" evidence="9">
    <location>
        <begin position="214"/>
        <end position="217"/>
    </location>
</feature>
<feature type="strand" evidence="10">
    <location>
        <begin position="220"/>
        <end position="222"/>
    </location>
</feature>
<feature type="strand" evidence="9">
    <location>
        <begin position="227"/>
        <end position="230"/>
    </location>
</feature>
<reference key="1">
    <citation type="journal article" date="1996" name="EMBO J.">
        <title>Complete nucleotide sequence of Saccharomyces cerevisiae chromosome X.</title>
        <authorList>
            <person name="Galibert F."/>
            <person name="Alexandraki D."/>
            <person name="Baur A."/>
            <person name="Boles E."/>
            <person name="Chalwatzis N."/>
            <person name="Chuat J.-C."/>
            <person name="Coster F."/>
            <person name="Cziepluch C."/>
            <person name="de Haan M."/>
            <person name="Domdey H."/>
            <person name="Durand P."/>
            <person name="Entian K.-D."/>
            <person name="Gatius M."/>
            <person name="Goffeau A."/>
            <person name="Grivell L.A."/>
            <person name="Hennemann A."/>
            <person name="Herbert C.J."/>
            <person name="Heumann K."/>
            <person name="Hilger F."/>
            <person name="Hollenberg C.P."/>
            <person name="Huang M.-E."/>
            <person name="Jacq C."/>
            <person name="Jauniaux J.-C."/>
            <person name="Katsoulou C."/>
            <person name="Kirchrath L."/>
            <person name="Kleine K."/>
            <person name="Kordes E."/>
            <person name="Koetter P."/>
            <person name="Liebl S."/>
            <person name="Louis E.J."/>
            <person name="Manus V."/>
            <person name="Mewes H.-W."/>
            <person name="Miosga T."/>
            <person name="Obermaier B."/>
            <person name="Perea J."/>
            <person name="Pohl T.M."/>
            <person name="Portetelle D."/>
            <person name="Pujol A."/>
            <person name="Purnelle B."/>
            <person name="Ramezani Rad M."/>
            <person name="Rasmussen S.W."/>
            <person name="Rose M."/>
            <person name="Rossau R."/>
            <person name="Schaaff-Gerstenschlaeger I."/>
            <person name="Smits P.H.M."/>
            <person name="Scarcez T."/>
            <person name="Soriano N."/>
            <person name="To Van D."/>
            <person name="Tzermia M."/>
            <person name="Van Broekhoven A."/>
            <person name="Vandenbol M."/>
            <person name="Wedler H."/>
            <person name="von Wettstein D."/>
            <person name="Wambutt R."/>
            <person name="Zagulski M."/>
            <person name="Zollner A."/>
            <person name="Karpfinger-Hartl L."/>
        </authorList>
    </citation>
    <scope>NUCLEOTIDE SEQUENCE [LARGE SCALE GENOMIC DNA]</scope>
    <source>
        <strain>ATCC 204508 / S288c</strain>
    </source>
</reference>
<reference key="2">
    <citation type="journal article" date="2014" name="G3 (Bethesda)">
        <title>The reference genome sequence of Saccharomyces cerevisiae: Then and now.</title>
        <authorList>
            <person name="Engel S.R."/>
            <person name="Dietrich F.S."/>
            <person name="Fisk D.G."/>
            <person name="Binkley G."/>
            <person name="Balakrishnan R."/>
            <person name="Costanzo M.C."/>
            <person name="Dwight S.S."/>
            <person name="Hitz B.C."/>
            <person name="Karra K."/>
            <person name="Nash R.S."/>
            <person name="Weng S."/>
            <person name="Wong E.D."/>
            <person name="Lloyd P."/>
            <person name="Skrzypek M.S."/>
            <person name="Miyasato S.R."/>
            <person name="Simison M."/>
            <person name="Cherry J.M."/>
        </authorList>
    </citation>
    <scope>GENOME REANNOTATION</scope>
    <source>
        <strain>ATCC 204508 / S288c</strain>
    </source>
</reference>
<reference key="3">
    <citation type="journal article" date="1999" name="Mol. Microbiol.">
        <title>MCM21 and MCM22, two novel genes of the yeast Saccharomyces cerevisiae are required for chromosome transmission.</title>
        <authorList>
            <person name="Poddar A."/>
            <person name="Roy N."/>
            <person name="Sinha P."/>
        </authorList>
    </citation>
    <scope>FUNCTION</scope>
</reference>
<reference key="4">
    <citation type="journal article" date="2002" name="Cell">
        <title>Phospho-regulation of kinetochore-microtubule attachments by the Aurora kinase Ipl1p.</title>
        <authorList>
            <person name="Cheeseman I.M."/>
            <person name="Anderson S."/>
            <person name="Jwa M."/>
            <person name="Green E.M."/>
            <person name="Kang J.-S."/>
            <person name="Yates J.R. III"/>
            <person name="Chan C.S.M."/>
            <person name="Drubin D.G."/>
            <person name="Barnes G."/>
        </authorList>
    </citation>
    <scope>IDENTIFICATION BY MASS SPECTROMETRY</scope>
    <scope>COMPONENT OF CTF19 COMPLEX</scope>
</reference>
<reference key="5">
    <citation type="journal article" date="2002" name="Genes Dev.">
        <title>Ctf3p, the Mis6 budding yeast homolog, interacts with Mcm22p and Mcm16p at the yeast outer kinetochore.</title>
        <authorList>
            <person name="Measday V."/>
            <person name="Hailey D.W."/>
            <person name="Pot I."/>
            <person name="Givan S.A."/>
            <person name="Hyland K.M."/>
            <person name="Cagney G."/>
            <person name="Fields S."/>
            <person name="Davis T.N."/>
            <person name="Hieter P."/>
        </authorList>
    </citation>
    <scope>INTERACTION WITH CTF3; CTF19 AND MCM16</scope>
    <scope>SUBCELLULAR LOCATION</scope>
</reference>
<reference key="6">
    <citation type="journal article" date="2003" name="Mol. Cell">
        <title>Assigning function to yeast proteins by integration of technologies.</title>
        <authorList>
            <person name="Hazbun T.R."/>
            <person name="Malmstroem L."/>
            <person name="Anderson S."/>
            <person name="Graczyk B.J."/>
            <person name="Fox B."/>
            <person name="Riffle M."/>
            <person name="Sundin B.A."/>
            <person name="Aranda J.D."/>
            <person name="McDonald W.H."/>
            <person name="Chiu C.-H."/>
            <person name="Snydsman B.E."/>
            <person name="Bradley P."/>
            <person name="Muller E.G.D."/>
            <person name="Fields S."/>
            <person name="Baker D."/>
            <person name="Yates J.R. III"/>
            <person name="Davis T.N."/>
        </authorList>
    </citation>
    <scope>IDENTIFICATION BY MASS SPECTROMETRY</scope>
</reference>
<reference key="7">
    <citation type="journal article" date="2003" name="Nature">
        <title>Global analysis of protein localization in budding yeast.</title>
        <authorList>
            <person name="Huh W.-K."/>
            <person name="Falvo J.V."/>
            <person name="Gerke L.C."/>
            <person name="Carroll A.S."/>
            <person name="Howson R.W."/>
            <person name="Weissman J.S."/>
            <person name="O'Shea E.K."/>
        </authorList>
    </citation>
    <scope>SUBCELLULAR LOCATION [LARGE SCALE ANALYSIS]</scope>
</reference>
<reference key="8">
    <citation type="journal article" date="2003" name="Nature">
        <title>Global analysis of protein expression in yeast.</title>
        <authorList>
            <person name="Ghaemmaghami S."/>
            <person name="Huh W.-K."/>
            <person name="Bower K."/>
            <person name="Howson R.W."/>
            <person name="Belle A."/>
            <person name="Dephoure N."/>
            <person name="O'Shea E.K."/>
            <person name="Weissman J.S."/>
        </authorList>
    </citation>
    <scope>LEVEL OF PROTEIN EXPRESSION [LARGE SCALE ANALYSIS]</scope>
</reference>
<reference key="9">
    <citation type="journal article" date="2012" name="Nat. Cell Biol.">
        <title>CENP-T proteins are conserved centromere receptors of the Ndc80 complex.</title>
        <authorList>
            <person name="Schleiffer A."/>
            <person name="Maier M."/>
            <person name="Litos G."/>
            <person name="Lampert F."/>
            <person name="Hornung P."/>
            <person name="Mechtler K."/>
            <person name="Westermann S."/>
        </authorList>
    </citation>
    <scope>IDENTIFICATION IN CCAN</scope>
    <scope>SUBUNIT</scope>
</reference>
<keyword id="KW-0002">3D-structure</keyword>
<keyword id="KW-0131">Cell cycle</keyword>
<keyword id="KW-0132">Cell division</keyword>
<keyword id="KW-0137">Centromere</keyword>
<keyword id="KW-0158">Chromosome</keyword>
<keyword id="KW-0995">Kinetochore</keyword>
<keyword id="KW-0469">Meiosis</keyword>
<keyword id="KW-0498">Mitosis</keyword>
<keyword id="KW-0539">Nucleus</keyword>
<keyword id="KW-1185">Reference proteome</keyword>
<gene>
    <name type="primary">MCM22</name>
    <name type="ordered locus">YJR135C</name>
    <name type="ORF">J2122</name>
</gene>
<accession>P47167</accession>
<accession>D6VWV3</accession>
<organism>
    <name type="scientific">Saccharomyces cerevisiae (strain ATCC 204508 / S288c)</name>
    <name type="common">Baker's yeast</name>
    <dbReference type="NCBI Taxonomy" id="559292"/>
    <lineage>
        <taxon>Eukaryota</taxon>
        <taxon>Fungi</taxon>
        <taxon>Dikarya</taxon>
        <taxon>Ascomycota</taxon>
        <taxon>Saccharomycotina</taxon>
        <taxon>Saccharomycetes</taxon>
        <taxon>Saccharomycetales</taxon>
        <taxon>Saccharomycetaceae</taxon>
        <taxon>Saccharomyces</taxon>
    </lineage>
</organism>